<organism>
    <name type="scientific">Drosophila melanogaster</name>
    <name type="common">Fruit fly</name>
    <dbReference type="NCBI Taxonomy" id="7227"/>
    <lineage>
        <taxon>Eukaryota</taxon>
        <taxon>Metazoa</taxon>
        <taxon>Ecdysozoa</taxon>
        <taxon>Arthropoda</taxon>
        <taxon>Hexapoda</taxon>
        <taxon>Insecta</taxon>
        <taxon>Pterygota</taxon>
        <taxon>Neoptera</taxon>
        <taxon>Endopterygota</taxon>
        <taxon>Diptera</taxon>
        <taxon>Brachycera</taxon>
        <taxon>Muscomorpha</taxon>
        <taxon>Ephydroidea</taxon>
        <taxon>Drosophilidae</taxon>
        <taxon>Drosophila</taxon>
        <taxon>Sophophora</taxon>
    </lineage>
</organism>
<feature type="chain" id="PRO_0000101769" description="Open rectifier potassium channel protein 1">
    <location>
        <begin position="1"/>
        <end position="1001"/>
    </location>
</feature>
<feature type="topological domain" description="Cytoplasmic" evidence="1">
    <location>
        <begin position="1"/>
        <end position="6"/>
    </location>
</feature>
<feature type="transmembrane region" description="Helical" evidence="1">
    <location>
        <begin position="7"/>
        <end position="27"/>
    </location>
</feature>
<feature type="intramembrane region" description="Pore-forming; Name=Pore-forming 1" evidence="1">
    <location>
        <begin position="95"/>
        <end position="111"/>
    </location>
</feature>
<feature type="transmembrane region" description="Helical" evidence="1">
    <location>
        <begin position="120"/>
        <end position="140"/>
    </location>
</feature>
<feature type="topological domain" description="Cytoplasmic" evidence="1">
    <location>
        <begin position="141"/>
        <end position="170"/>
    </location>
</feature>
<feature type="transmembrane region" description="Helical" evidence="1">
    <location>
        <begin position="171"/>
        <end position="191"/>
    </location>
</feature>
<feature type="intramembrane region" description="Pore-forming; Name=Pore-forming 2" evidence="1">
    <location>
        <begin position="208"/>
        <end position="224"/>
    </location>
</feature>
<feature type="transmembrane region" description="Helical" evidence="1">
    <location>
        <begin position="244"/>
        <end position="264"/>
    </location>
</feature>
<feature type="topological domain" description="Cytoplasmic" evidence="1">
    <location>
        <begin position="265"/>
        <end position="1001"/>
    </location>
</feature>
<feature type="region of interest" description="Disordered" evidence="2">
    <location>
        <begin position="591"/>
        <end position="668"/>
    </location>
</feature>
<feature type="region of interest" description="Disordered" evidence="2">
    <location>
        <begin position="768"/>
        <end position="795"/>
    </location>
</feature>
<feature type="region of interest" description="Disordered" evidence="2">
    <location>
        <begin position="830"/>
        <end position="1001"/>
    </location>
</feature>
<feature type="compositionally biased region" description="Low complexity" evidence="2">
    <location>
        <begin position="832"/>
        <end position="841"/>
    </location>
</feature>
<feature type="compositionally biased region" description="Polar residues" evidence="2">
    <location>
        <begin position="855"/>
        <end position="873"/>
    </location>
</feature>
<feature type="compositionally biased region" description="Low complexity" evidence="2">
    <location>
        <begin position="911"/>
        <end position="926"/>
    </location>
</feature>
<feature type="compositionally biased region" description="Polar residues" evidence="2">
    <location>
        <begin position="961"/>
        <end position="983"/>
    </location>
</feature>
<feature type="compositionally biased region" description="Low complexity" evidence="2">
    <location>
        <begin position="984"/>
        <end position="1001"/>
    </location>
</feature>
<feature type="modified residue" description="Phosphoserine" evidence="3">
    <location>
        <position position="332"/>
    </location>
</feature>
<feature type="modified residue" description="Phosphoserine" evidence="3">
    <location>
        <position position="373"/>
    </location>
</feature>
<feature type="modified residue" description="Phosphoserine" evidence="3">
    <location>
        <position position="562"/>
    </location>
</feature>
<feature type="modified residue" description="Phosphoserine" evidence="3">
    <location>
        <position position="565"/>
    </location>
</feature>
<feature type="modified residue" description="Phosphoserine" evidence="3">
    <location>
        <position position="685"/>
    </location>
</feature>
<feature type="modified residue" description="Phosphoserine" evidence="3">
    <location>
        <position position="691"/>
    </location>
</feature>
<feature type="modified residue" description="Phosphoserine" evidence="3">
    <location>
        <position position="715"/>
    </location>
</feature>
<feature type="glycosylation site" description="N-linked (GlcNAc...) asparagine" evidence="1">
    <location>
        <position position="58"/>
    </location>
</feature>
<feature type="sequence conflict" description="In Ref. 4; ABB36455." evidence="5" ref="4">
    <original>A</original>
    <variation>V</variation>
    <location>
        <position position="454"/>
    </location>
</feature>
<protein>
    <recommendedName>
        <fullName>Open rectifier potassium channel protein 1</fullName>
    </recommendedName>
    <alternativeName>
        <fullName>Two pore domain potassium channel Ork1</fullName>
    </alternativeName>
</protein>
<keyword id="KW-0325">Glycoprotein</keyword>
<keyword id="KW-0407">Ion channel</keyword>
<keyword id="KW-0406">Ion transport</keyword>
<keyword id="KW-0472">Membrane</keyword>
<keyword id="KW-0597">Phosphoprotein</keyword>
<keyword id="KW-0630">Potassium</keyword>
<keyword id="KW-0633">Potassium transport</keyword>
<keyword id="KW-1185">Reference proteome</keyword>
<keyword id="KW-0812">Transmembrane</keyword>
<keyword id="KW-1133">Transmembrane helix</keyword>
<keyword id="KW-0813">Transport</keyword>
<name>ORK1_DROME</name>
<gene>
    <name type="primary">Ork1</name>
    <name type="ORF">CG1615</name>
</gene>
<evidence type="ECO:0000255" key="1"/>
<evidence type="ECO:0000256" key="2">
    <source>
        <dbReference type="SAM" id="MobiDB-lite"/>
    </source>
</evidence>
<evidence type="ECO:0000269" key="3">
    <source>
    </source>
</evidence>
<evidence type="ECO:0000269" key="4">
    <source>
    </source>
</evidence>
<evidence type="ECO:0000305" key="5"/>
<comment type="function">
    <text evidence="4">Background potassium channel. Rectification is dependent on external potassium concentration. Acts as an outwardly rectifying channel but as external potassium levels increase, this is reversed.</text>
</comment>
<comment type="subcellular location">
    <subcellularLocation>
        <location evidence="5">Membrane</location>
        <topology evidence="5">Multi-pass membrane protein</topology>
    </subcellularLocation>
</comment>
<comment type="tissue specificity">
    <text evidence="4">Widespread expression in adult, strongest expression in muscle, brain and ovary. Also present at low levels in larva and embryo.</text>
</comment>
<comment type="miscellaneous">
    <text>Inhibited by barium.</text>
</comment>
<comment type="similarity">
    <text evidence="5">Belongs to the two pore domain potassium channel (TC 1.A.1.8) family.</text>
</comment>
<comment type="sequence caution" evidence="5">
    <conflict type="erroneous initiation">
        <sequence resource="EMBL-CDS" id="AAL13684"/>
    </conflict>
</comment>
<sequence length="1001" mass="109290">MSPNRWILLLIFYISYLMFGAAIYYHIEHGEEKISRAEQRKAQIAINEYLLEELGDKNTTTQDEILQRISDYCDKPVTLPPTYDDTPYTWTFYHAFFFAFTVCSTVGYGNISPTTFAGRMIMIAYSVIGIPVNGILFAGLGEYFGRTFEAIYRRYKKYKMSTDMHYVPPQLGLITTVVIALIPGIALFLLLPSWVFTYFENWPYSISLYYSYVTTTTIGFGDYVPTFGANQPKEFGGWFVVYQIFVIVWFIFSLGYLVMIMTFITRGLQSKKLAYLEQQLSSNLKATQNRIWSGVTKDVGYLRRMLNELYILKVKPVYTDVDIAYTLPRSNSCPDLSMYRVEPAPIPSRKRAFSVCADMVAAQREAGMVHANSDTELSKLDREKTFETAEAYRQTTDLLAKVVNALATVKPPPAEQEDAALYGGYHGFSDSQILASEWSFSTVNEFTSPRRPRARACSDFNLEAPRWQSERPLRSSHNEWTWSGDNQQIQEAFNQRYKGQQRANGAANSTMVHLEPDALEEQLKKQSPGAGRVKKFSMPDGLRRLFPFQKKRPSQDLERKLSVVSVPEGVISQQARSPLDYYSNTVTAASSQSYLRNGRGPPPPFESNGSLASGGGGLTNMGFQMEDGATPPSALGGGAYQRKAAAGKRRRESIYTQNQAPSARRGSMYPPTAHALAQMQMRRGSLATSGSGSAAMAAVAARRGSLFPATASASSLTSAPRRSSIFSVTSEKDMNVLEQTTIADLIRALEVVHTHAVLDEQQQAAAAGGAAGGGGISRGSRKQRKMGNAGLEPPQLPPILSLFAGDQTRTLQAAAANRLYARRSTIVGISPTGGAATAPAARSLLEPPPSYTERAANQSQITAGPSNAPTVQSKFRRRFSVRPTALQIPPGQAPPPGASLMEQSSQTALQRRLSLRPSPLARELSPTSPPGGSGSALPAGAIDESGGTSAQRLLPLPAGTRPSTSSTHSPLSRIVQISQAQRKSSMPSAAATGSSGAPAEK</sequence>
<accession>Q94526</accession>
<accession>B5RIM4</accession>
<accession>Q0KHU1</accession>
<accession>Q32KC8</accession>
<accession>Q95TX7</accession>
<reference key="1">
    <citation type="journal article" date="1996" name="Proc. Natl. Acad. Sci. U.S.A.">
        <title>ORK1, a potassium-selective leak channel with two pore domains cloned from Drosophila melanogaster by expression in Saccharomyces cerevisiae.</title>
        <authorList>
            <person name="Goldstein S.A.N."/>
            <person name="Price L.A."/>
            <person name="Rosenthal D.N."/>
            <person name="Pausch M.H."/>
        </authorList>
    </citation>
    <scope>NUCLEOTIDE SEQUENCE [MRNA]</scope>
    <scope>FUNCTION</scope>
    <scope>TISSUE SPECIFICITY</scope>
    <source>
        <tissue>Brain</tissue>
        <tissue>Larva</tissue>
        <tissue>Muscle</tissue>
    </source>
</reference>
<reference key="2">
    <citation type="journal article" date="2000" name="Science">
        <title>The genome sequence of Drosophila melanogaster.</title>
        <authorList>
            <person name="Adams M.D."/>
            <person name="Celniker S.E."/>
            <person name="Holt R.A."/>
            <person name="Evans C.A."/>
            <person name="Gocayne J.D."/>
            <person name="Amanatides P.G."/>
            <person name="Scherer S.E."/>
            <person name="Li P.W."/>
            <person name="Hoskins R.A."/>
            <person name="Galle R.F."/>
            <person name="George R.A."/>
            <person name="Lewis S.E."/>
            <person name="Richards S."/>
            <person name="Ashburner M."/>
            <person name="Henderson S.N."/>
            <person name="Sutton G.G."/>
            <person name="Wortman J.R."/>
            <person name="Yandell M.D."/>
            <person name="Zhang Q."/>
            <person name="Chen L.X."/>
            <person name="Brandon R.C."/>
            <person name="Rogers Y.-H.C."/>
            <person name="Blazej R.G."/>
            <person name="Champe M."/>
            <person name="Pfeiffer B.D."/>
            <person name="Wan K.H."/>
            <person name="Doyle C."/>
            <person name="Baxter E.G."/>
            <person name="Helt G."/>
            <person name="Nelson C.R."/>
            <person name="Miklos G.L.G."/>
            <person name="Abril J.F."/>
            <person name="Agbayani A."/>
            <person name="An H.-J."/>
            <person name="Andrews-Pfannkoch C."/>
            <person name="Baldwin D."/>
            <person name="Ballew R.M."/>
            <person name="Basu A."/>
            <person name="Baxendale J."/>
            <person name="Bayraktaroglu L."/>
            <person name="Beasley E.M."/>
            <person name="Beeson K.Y."/>
            <person name="Benos P.V."/>
            <person name="Berman B.P."/>
            <person name="Bhandari D."/>
            <person name="Bolshakov S."/>
            <person name="Borkova D."/>
            <person name="Botchan M.R."/>
            <person name="Bouck J."/>
            <person name="Brokstein P."/>
            <person name="Brottier P."/>
            <person name="Burtis K.C."/>
            <person name="Busam D.A."/>
            <person name="Butler H."/>
            <person name="Cadieu E."/>
            <person name="Center A."/>
            <person name="Chandra I."/>
            <person name="Cherry J.M."/>
            <person name="Cawley S."/>
            <person name="Dahlke C."/>
            <person name="Davenport L.B."/>
            <person name="Davies P."/>
            <person name="de Pablos B."/>
            <person name="Delcher A."/>
            <person name="Deng Z."/>
            <person name="Mays A.D."/>
            <person name="Dew I."/>
            <person name="Dietz S.M."/>
            <person name="Dodson K."/>
            <person name="Doup L.E."/>
            <person name="Downes M."/>
            <person name="Dugan-Rocha S."/>
            <person name="Dunkov B.C."/>
            <person name="Dunn P."/>
            <person name="Durbin K.J."/>
            <person name="Evangelista C.C."/>
            <person name="Ferraz C."/>
            <person name="Ferriera S."/>
            <person name="Fleischmann W."/>
            <person name="Fosler C."/>
            <person name="Gabrielian A.E."/>
            <person name="Garg N.S."/>
            <person name="Gelbart W.M."/>
            <person name="Glasser K."/>
            <person name="Glodek A."/>
            <person name="Gong F."/>
            <person name="Gorrell J.H."/>
            <person name="Gu Z."/>
            <person name="Guan P."/>
            <person name="Harris M."/>
            <person name="Harris N.L."/>
            <person name="Harvey D.A."/>
            <person name="Heiman T.J."/>
            <person name="Hernandez J.R."/>
            <person name="Houck J."/>
            <person name="Hostin D."/>
            <person name="Houston K.A."/>
            <person name="Howland T.J."/>
            <person name="Wei M.-H."/>
            <person name="Ibegwam C."/>
            <person name="Jalali M."/>
            <person name="Kalush F."/>
            <person name="Karpen G.H."/>
            <person name="Ke Z."/>
            <person name="Kennison J.A."/>
            <person name="Ketchum K.A."/>
            <person name="Kimmel B.E."/>
            <person name="Kodira C.D."/>
            <person name="Kraft C.L."/>
            <person name="Kravitz S."/>
            <person name="Kulp D."/>
            <person name="Lai Z."/>
            <person name="Lasko P."/>
            <person name="Lei Y."/>
            <person name="Levitsky A.A."/>
            <person name="Li J.H."/>
            <person name="Li Z."/>
            <person name="Liang Y."/>
            <person name="Lin X."/>
            <person name="Liu X."/>
            <person name="Mattei B."/>
            <person name="McIntosh T.C."/>
            <person name="McLeod M.P."/>
            <person name="McPherson D."/>
            <person name="Merkulov G."/>
            <person name="Milshina N.V."/>
            <person name="Mobarry C."/>
            <person name="Morris J."/>
            <person name="Moshrefi A."/>
            <person name="Mount S.M."/>
            <person name="Moy M."/>
            <person name="Murphy B."/>
            <person name="Murphy L."/>
            <person name="Muzny D.M."/>
            <person name="Nelson D.L."/>
            <person name="Nelson D.R."/>
            <person name="Nelson K.A."/>
            <person name="Nixon K."/>
            <person name="Nusskern D.R."/>
            <person name="Pacleb J.M."/>
            <person name="Palazzolo M."/>
            <person name="Pittman G.S."/>
            <person name="Pan S."/>
            <person name="Pollard J."/>
            <person name="Puri V."/>
            <person name="Reese M.G."/>
            <person name="Reinert K."/>
            <person name="Remington K."/>
            <person name="Saunders R.D.C."/>
            <person name="Scheeler F."/>
            <person name="Shen H."/>
            <person name="Shue B.C."/>
            <person name="Siden-Kiamos I."/>
            <person name="Simpson M."/>
            <person name="Skupski M.P."/>
            <person name="Smith T.J."/>
            <person name="Spier E."/>
            <person name="Spradling A.C."/>
            <person name="Stapleton M."/>
            <person name="Strong R."/>
            <person name="Sun E."/>
            <person name="Svirskas R."/>
            <person name="Tector C."/>
            <person name="Turner R."/>
            <person name="Venter E."/>
            <person name="Wang A.H."/>
            <person name="Wang X."/>
            <person name="Wang Z.-Y."/>
            <person name="Wassarman D.A."/>
            <person name="Weinstock G.M."/>
            <person name="Weissenbach J."/>
            <person name="Williams S.M."/>
            <person name="Woodage T."/>
            <person name="Worley K.C."/>
            <person name="Wu D."/>
            <person name="Yang S."/>
            <person name="Yao Q.A."/>
            <person name="Ye J."/>
            <person name="Yeh R.-F."/>
            <person name="Zaveri J.S."/>
            <person name="Zhan M."/>
            <person name="Zhang G."/>
            <person name="Zhao Q."/>
            <person name="Zheng L."/>
            <person name="Zheng X.H."/>
            <person name="Zhong F.N."/>
            <person name="Zhong W."/>
            <person name="Zhou X."/>
            <person name="Zhu S.C."/>
            <person name="Zhu X."/>
            <person name="Smith H.O."/>
            <person name="Gibbs R.A."/>
            <person name="Myers E.W."/>
            <person name="Rubin G.M."/>
            <person name="Venter J.C."/>
        </authorList>
    </citation>
    <scope>NUCLEOTIDE SEQUENCE [LARGE SCALE GENOMIC DNA]</scope>
    <source>
        <strain>Berkeley</strain>
    </source>
</reference>
<reference key="3">
    <citation type="journal article" date="2002" name="Genome Biol.">
        <title>Annotation of the Drosophila melanogaster euchromatic genome: a systematic review.</title>
        <authorList>
            <person name="Misra S."/>
            <person name="Crosby M.A."/>
            <person name="Mungall C.J."/>
            <person name="Matthews B.B."/>
            <person name="Campbell K.S."/>
            <person name="Hradecky P."/>
            <person name="Huang Y."/>
            <person name="Kaminker J.S."/>
            <person name="Millburn G.H."/>
            <person name="Prochnik S.E."/>
            <person name="Smith C.D."/>
            <person name="Tupy J.L."/>
            <person name="Whitfield E.J."/>
            <person name="Bayraktaroglu L."/>
            <person name="Berman B.P."/>
            <person name="Bettencourt B.R."/>
            <person name="Celniker S.E."/>
            <person name="de Grey A.D.N.J."/>
            <person name="Drysdale R.A."/>
            <person name="Harris N.L."/>
            <person name="Richter J."/>
            <person name="Russo S."/>
            <person name="Schroeder A.J."/>
            <person name="Shu S.Q."/>
            <person name="Stapleton M."/>
            <person name="Yamada C."/>
            <person name="Ashburner M."/>
            <person name="Gelbart W.M."/>
            <person name="Rubin G.M."/>
            <person name="Lewis S.E."/>
        </authorList>
    </citation>
    <scope>GENOME REANNOTATION</scope>
    <source>
        <strain>Berkeley</strain>
    </source>
</reference>
<reference key="4">
    <citation type="submission" date="2008-09" db="EMBL/GenBank/DDBJ databases">
        <authorList>
            <person name="Stapleton M."/>
            <person name="Carlson J.W."/>
            <person name="Booth B."/>
            <person name="Chavez C."/>
            <person name="Frise E."/>
            <person name="George R.A."/>
            <person name="Pacleb J.M."/>
            <person name="Park S."/>
            <person name="Wan K.H."/>
            <person name="Yu C."/>
            <person name="Celniker S.E."/>
        </authorList>
    </citation>
    <scope>NUCLEOTIDE SEQUENCE [LARGE SCALE MRNA]</scope>
    <source>
        <strain>Berkeley</strain>
        <tissue>Head</tissue>
    </source>
</reference>
<reference key="5">
    <citation type="journal article" date="2002" name="Genome Biol.">
        <title>A Drosophila full-length cDNA resource.</title>
        <authorList>
            <person name="Stapleton M."/>
            <person name="Carlson J.W."/>
            <person name="Brokstein P."/>
            <person name="Yu C."/>
            <person name="Champe M."/>
            <person name="George R.A."/>
            <person name="Guarin H."/>
            <person name="Kronmiller B."/>
            <person name="Pacleb J.M."/>
            <person name="Park S."/>
            <person name="Wan K.H."/>
            <person name="Rubin G.M."/>
            <person name="Celniker S.E."/>
        </authorList>
    </citation>
    <scope>NUCLEOTIDE SEQUENCE [LARGE SCALE MRNA] OF 508-1001</scope>
    <source>
        <strain>Berkeley</strain>
        <tissue>Head</tissue>
    </source>
</reference>
<reference key="6">
    <citation type="journal article" date="2008" name="J. Proteome Res.">
        <title>Phosphoproteome analysis of Drosophila melanogaster embryos.</title>
        <authorList>
            <person name="Zhai B."/>
            <person name="Villen J."/>
            <person name="Beausoleil S.A."/>
            <person name="Mintseris J."/>
            <person name="Gygi S.P."/>
        </authorList>
    </citation>
    <scope>PHOSPHORYLATION [LARGE SCALE ANALYSIS] AT SER-332; SER-373; SER-562; SER-565; SER-685; SER-691 AND SER-715</scope>
    <scope>IDENTIFICATION BY MASS SPECTROMETRY</scope>
    <source>
        <tissue>Embryo</tissue>
    </source>
</reference>
<dbReference type="EMBL" id="U55321">
    <property type="protein sequence ID" value="AAC69250.1"/>
    <property type="molecule type" value="mRNA"/>
</dbReference>
<dbReference type="EMBL" id="AE014298">
    <property type="protein sequence ID" value="AAN09276.1"/>
    <property type="molecule type" value="Genomic_DNA"/>
</dbReference>
<dbReference type="EMBL" id="BT023951">
    <property type="protein sequence ID" value="ABB36455.1"/>
    <property type="molecule type" value="mRNA"/>
</dbReference>
<dbReference type="EMBL" id="BT044148">
    <property type="protein sequence ID" value="ACH92213.1"/>
    <property type="molecule type" value="mRNA"/>
</dbReference>
<dbReference type="EMBL" id="AY058455">
    <property type="protein sequence ID" value="AAL13684.1"/>
    <property type="status" value="ALT_INIT"/>
    <property type="molecule type" value="mRNA"/>
</dbReference>
<dbReference type="PIR" id="T13807">
    <property type="entry name" value="T13807"/>
</dbReference>
<dbReference type="RefSeq" id="NP_001285096.1">
    <property type="nucleotide sequence ID" value="NM_001298167.1"/>
</dbReference>
<dbReference type="RefSeq" id="NP_511112.1">
    <property type="nucleotide sequence ID" value="NM_078557.5"/>
</dbReference>
<dbReference type="RefSeq" id="NP_727466.1">
    <property type="nucleotide sequence ID" value="NM_167259.3"/>
</dbReference>
<dbReference type="SMR" id="Q94526"/>
<dbReference type="BioGRID" id="58437">
    <property type="interactions" value="5"/>
</dbReference>
<dbReference type="DIP" id="DIP-22401N"/>
<dbReference type="FunCoup" id="Q94526">
    <property type="interactions" value="12"/>
</dbReference>
<dbReference type="IntAct" id="Q94526">
    <property type="interactions" value="3"/>
</dbReference>
<dbReference type="STRING" id="7227.FBpp0310181"/>
<dbReference type="GlyCosmos" id="Q94526">
    <property type="glycosylation" value="1 site, No reported glycans"/>
</dbReference>
<dbReference type="GlyGen" id="Q94526">
    <property type="glycosylation" value="2 sites"/>
</dbReference>
<dbReference type="iPTMnet" id="Q94526"/>
<dbReference type="PaxDb" id="7227-FBpp0073261"/>
<dbReference type="DNASU" id="32020"/>
<dbReference type="EnsemblMetazoa" id="FBtr0073404">
    <property type="protein sequence ID" value="FBpp0073260"/>
    <property type="gene ID" value="FBgn0017561"/>
</dbReference>
<dbReference type="EnsemblMetazoa" id="FBtr0073405">
    <property type="protein sequence ID" value="FBpp0073261"/>
    <property type="gene ID" value="FBgn0017561"/>
</dbReference>
<dbReference type="EnsemblMetazoa" id="FBtr0346304">
    <property type="protein sequence ID" value="FBpp0312045"/>
    <property type="gene ID" value="FBgn0017561"/>
</dbReference>
<dbReference type="GeneID" id="32020"/>
<dbReference type="KEGG" id="dme:Dmel_CG1615"/>
<dbReference type="AGR" id="FB:FBgn0017561"/>
<dbReference type="CTD" id="32020"/>
<dbReference type="FlyBase" id="FBgn0017561">
    <property type="gene designation" value="Ork1"/>
</dbReference>
<dbReference type="VEuPathDB" id="VectorBase:FBgn0017561"/>
<dbReference type="eggNOG" id="KOG1418">
    <property type="taxonomic scope" value="Eukaryota"/>
</dbReference>
<dbReference type="HOGENOM" id="CLU_331565_0_0_1"/>
<dbReference type="InParanoid" id="Q94526"/>
<dbReference type="OrthoDB" id="297496at2759"/>
<dbReference type="PhylomeDB" id="Q94526"/>
<dbReference type="SignaLink" id="Q94526"/>
<dbReference type="BioGRID-ORCS" id="32020">
    <property type="hits" value="0 hits in 3 CRISPR screens"/>
</dbReference>
<dbReference type="GenomeRNAi" id="32020"/>
<dbReference type="PRO" id="PR:Q94526"/>
<dbReference type="Proteomes" id="UP000000803">
    <property type="component" value="Chromosome X"/>
</dbReference>
<dbReference type="Bgee" id="FBgn0017561">
    <property type="expression patterns" value="Expressed in fat body cell in open tracheal system trachea and 76 other cell types or tissues"/>
</dbReference>
<dbReference type="ExpressionAtlas" id="Q94526">
    <property type="expression patterns" value="baseline and differential"/>
</dbReference>
<dbReference type="GO" id="GO:0016020">
    <property type="term" value="C:membrane"/>
    <property type="evidence" value="ECO:0000314"/>
    <property type="project" value="FlyBase"/>
</dbReference>
<dbReference type="GO" id="GO:0005886">
    <property type="term" value="C:plasma membrane"/>
    <property type="evidence" value="ECO:0000250"/>
    <property type="project" value="FlyBase"/>
</dbReference>
<dbReference type="GO" id="GO:0034705">
    <property type="term" value="C:potassium channel complex"/>
    <property type="evidence" value="ECO:0000314"/>
    <property type="project" value="FlyBase"/>
</dbReference>
<dbReference type="GO" id="GO:0015271">
    <property type="term" value="F:outward rectifier potassium channel activity"/>
    <property type="evidence" value="ECO:0000318"/>
    <property type="project" value="GO_Central"/>
</dbReference>
<dbReference type="GO" id="GO:0022841">
    <property type="term" value="F:potassium ion leak channel activity"/>
    <property type="evidence" value="ECO:0000314"/>
    <property type="project" value="FlyBase"/>
</dbReference>
<dbReference type="GO" id="GO:0042803">
    <property type="term" value="F:protein homodimerization activity"/>
    <property type="evidence" value="ECO:0000353"/>
    <property type="project" value="FlyBase"/>
</dbReference>
<dbReference type="GO" id="GO:0045475">
    <property type="term" value="P:locomotor rhythm"/>
    <property type="evidence" value="ECO:0000315"/>
    <property type="project" value="FlyBase"/>
</dbReference>
<dbReference type="GO" id="GO:0071805">
    <property type="term" value="P:potassium ion transmembrane transport"/>
    <property type="evidence" value="ECO:0000314"/>
    <property type="project" value="FlyBase"/>
</dbReference>
<dbReference type="GO" id="GO:0002027">
    <property type="term" value="P:regulation of heart rate"/>
    <property type="evidence" value="ECO:0000315"/>
    <property type="project" value="FlyBase"/>
</dbReference>
<dbReference type="FunFam" id="1.10.287.70:FF:000210">
    <property type="entry name" value="Open rectifier potassium channel protein 1"/>
    <property type="match status" value="1"/>
</dbReference>
<dbReference type="Gene3D" id="1.10.287.70">
    <property type="match status" value="1"/>
</dbReference>
<dbReference type="InterPro" id="IPR003280">
    <property type="entry name" value="2pore_dom_K_chnl"/>
</dbReference>
<dbReference type="InterPro" id="IPR013099">
    <property type="entry name" value="K_chnl_dom"/>
</dbReference>
<dbReference type="PANTHER" id="PTHR11003:SF331">
    <property type="entry name" value="OPEN RECTIFIER POTASSIUM CHANNEL PROTEIN 1"/>
    <property type="match status" value="1"/>
</dbReference>
<dbReference type="PANTHER" id="PTHR11003">
    <property type="entry name" value="POTASSIUM CHANNEL, SUBFAMILY K"/>
    <property type="match status" value="1"/>
</dbReference>
<dbReference type="Pfam" id="PF07885">
    <property type="entry name" value="Ion_trans_2"/>
    <property type="match status" value="2"/>
</dbReference>
<dbReference type="PRINTS" id="PR01333">
    <property type="entry name" value="2POREKCHANEL"/>
</dbReference>
<dbReference type="SUPFAM" id="SSF81324">
    <property type="entry name" value="Voltage-gated potassium channels"/>
    <property type="match status" value="2"/>
</dbReference>
<proteinExistence type="evidence at protein level"/>